<protein>
    <recommendedName>
        <fullName evidence="1">Glutarate 2-hydroxylase</fullName>
        <shortName evidence="1">G-2-H</shortName>
        <ecNumber evidence="1">1.14.11.64</ecNumber>
    </recommendedName>
</protein>
<feature type="chain" id="PRO_1000064805" description="Glutarate 2-hydroxylase">
    <location>
        <begin position="1"/>
        <end position="325"/>
    </location>
</feature>
<feature type="binding site" evidence="1">
    <location>
        <position position="160"/>
    </location>
    <ligand>
        <name>Fe cation</name>
        <dbReference type="ChEBI" id="CHEBI:24875"/>
    </ligand>
</feature>
<feature type="binding site" evidence="1">
    <location>
        <position position="162"/>
    </location>
    <ligand>
        <name>Fe cation</name>
        <dbReference type="ChEBI" id="CHEBI:24875"/>
    </ligand>
</feature>
<feature type="binding site" evidence="1">
    <location>
        <position position="292"/>
    </location>
    <ligand>
        <name>Fe cation</name>
        <dbReference type="ChEBI" id="CHEBI:24875"/>
    </ligand>
</feature>
<proteinExistence type="inferred from homology"/>
<comment type="function">
    <text evidence="1">Acts as an alpha-ketoglutarate-dependent dioxygenase catalyzing hydroxylation of glutarate (GA) to L-2-hydroxyglutarate (L2HG). Functions in a L-lysine degradation pathway that proceeds via cadaverine, glutarate and L-2-hydroxyglutarate.</text>
</comment>
<comment type="catalytic activity">
    <reaction evidence="1">
        <text>glutarate + 2-oxoglutarate + O2 = (S)-2-hydroxyglutarate + succinate + CO2</text>
        <dbReference type="Rhea" id="RHEA:13821"/>
        <dbReference type="ChEBI" id="CHEBI:15379"/>
        <dbReference type="ChEBI" id="CHEBI:16526"/>
        <dbReference type="ChEBI" id="CHEBI:16782"/>
        <dbReference type="ChEBI" id="CHEBI:16810"/>
        <dbReference type="ChEBI" id="CHEBI:30031"/>
        <dbReference type="ChEBI" id="CHEBI:30921"/>
        <dbReference type="EC" id="1.14.11.64"/>
    </reaction>
    <physiologicalReaction direction="left-to-right" evidence="1">
        <dbReference type="Rhea" id="RHEA:13822"/>
    </physiologicalReaction>
</comment>
<comment type="cofactor">
    <cofactor evidence="1">
        <name>Fe(2+)</name>
        <dbReference type="ChEBI" id="CHEBI:29033"/>
    </cofactor>
    <text evidence="1">Binds 1 Fe(2+) ion per subunit.</text>
</comment>
<comment type="pathway">
    <text evidence="1">Amino-acid degradation.</text>
</comment>
<comment type="subunit">
    <text evidence="1">Homotetramer.</text>
</comment>
<comment type="similarity">
    <text evidence="1">Belongs to the glutarate hydroxylase family.</text>
</comment>
<reference key="1">
    <citation type="submission" date="2007-08" db="EMBL/GenBank/DDBJ databases">
        <authorList>
            <consortium name="The Citrobacter koseri Genome Sequencing Project"/>
            <person name="McClelland M."/>
            <person name="Sanderson E.K."/>
            <person name="Porwollik S."/>
            <person name="Spieth J."/>
            <person name="Clifton W.S."/>
            <person name="Latreille P."/>
            <person name="Courtney L."/>
            <person name="Wang C."/>
            <person name="Pepin K."/>
            <person name="Bhonagiri V."/>
            <person name="Nash W."/>
            <person name="Johnson M."/>
            <person name="Thiruvilangam P."/>
            <person name="Wilson R."/>
        </authorList>
    </citation>
    <scope>NUCLEOTIDE SEQUENCE [LARGE SCALE GENOMIC DNA]</scope>
    <source>
        <strain>ATCC BAA-895 / CDC 4225-83 / SGSC4696</strain>
    </source>
</reference>
<dbReference type="EC" id="1.14.11.64" evidence="1"/>
<dbReference type="EMBL" id="CP000822">
    <property type="protein sequence ID" value="ABV15078.1"/>
    <property type="molecule type" value="Genomic_DNA"/>
</dbReference>
<dbReference type="RefSeq" id="WP_012134770.1">
    <property type="nucleotide sequence ID" value="NC_009792.1"/>
</dbReference>
<dbReference type="SMR" id="A8ANL5"/>
<dbReference type="STRING" id="290338.CKO_04006"/>
<dbReference type="GeneID" id="45137653"/>
<dbReference type="KEGG" id="cko:CKO_04006"/>
<dbReference type="HOGENOM" id="CLU_075277_0_0_6"/>
<dbReference type="OrthoDB" id="8954293at2"/>
<dbReference type="Proteomes" id="UP000008148">
    <property type="component" value="Chromosome"/>
</dbReference>
<dbReference type="GO" id="GO:0008198">
    <property type="term" value="F:ferrous iron binding"/>
    <property type="evidence" value="ECO:0007669"/>
    <property type="project" value="UniProtKB-UniRule"/>
</dbReference>
<dbReference type="GO" id="GO:0106343">
    <property type="term" value="F:glutarate dioxygenase activity"/>
    <property type="evidence" value="ECO:0007669"/>
    <property type="project" value="UniProtKB-EC"/>
</dbReference>
<dbReference type="GO" id="GO:0050498">
    <property type="term" value="F:oxidoreductase activity, acting on paired donors, with incorporation or reduction of molecular oxygen, with 2-oxoglutarate as one donor, and the other dehydrogenated"/>
    <property type="evidence" value="ECO:0007669"/>
    <property type="project" value="UniProtKB-UniRule"/>
</dbReference>
<dbReference type="GO" id="GO:0019477">
    <property type="term" value="P:L-lysine catabolic process"/>
    <property type="evidence" value="ECO:0007669"/>
    <property type="project" value="UniProtKB-UniRule"/>
</dbReference>
<dbReference type="CDD" id="cd00250">
    <property type="entry name" value="CAS_like"/>
    <property type="match status" value="1"/>
</dbReference>
<dbReference type="Gene3D" id="3.60.130.10">
    <property type="entry name" value="Clavaminate synthase-like"/>
    <property type="match status" value="1"/>
</dbReference>
<dbReference type="HAMAP" id="MF_01083">
    <property type="entry name" value="glutarate_hydroxylase"/>
    <property type="match status" value="1"/>
</dbReference>
<dbReference type="InterPro" id="IPR015038">
    <property type="entry name" value="GlaH"/>
</dbReference>
<dbReference type="InterPro" id="IPR042098">
    <property type="entry name" value="TauD-like_sf"/>
</dbReference>
<dbReference type="NCBIfam" id="NF002814">
    <property type="entry name" value="PRK02963.1"/>
    <property type="match status" value="1"/>
</dbReference>
<dbReference type="Pfam" id="PF08943">
    <property type="entry name" value="CsiD"/>
    <property type="match status" value="1"/>
</dbReference>
<dbReference type="SUPFAM" id="SSF51197">
    <property type="entry name" value="Clavaminate synthase-like"/>
    <property type="match status" value="1"/>
</dbReference>
<name>GLAH_CITK8</name>
<organism>
    <name type="scientific">Citrobacter koseri (strain ATCC BAA-895 / CDC 4225-83 / SGSC4696)</name>
    <dbReference type="NCBI Taxonomy" id="290338"/>
    <lineage>
        <taxon>Bacteria</taxon>
        <taxon>Pseudomonadati</taxon>
        <taxon>Pseudomonadota</taxon>
        <taxon>Gammaproteobacteria</taxon>
        <taxon>Enterobacterales</taxon>
        <taxon>Enterobacteriaceae</taxon>
        <taxon>Citrobacter</taxon>
    </lineage>
</organism>
<accession>A8ANL5</accession>
<keyword id="KW-0223">Dioxygenase</keyword>
<keyword id="KW-0408">Iron</keyword>
<keyword id="KW-0479">Metal-binding</keyword>
<keyword id="KW-0560">Oxidoreductase</keyword>
<keyword id="KW-1185">Reference proteome</keyword>
<evidence type="ECO:0000255" key="1">
    <source>
        <dbReference type="HAMAP-Rule" id="MF_01083"/>
    </source>
</evidence>
<sequence length="325" mass="37243">MNALTAVKTNADSVTRSDAGFTFAPSVQSPRLLELTFSAKTTAQFLQQVEQWPVQALEYKSFLRFKVGQILDALCGNQLQPLLIKTLLDRAEGALLINAEGIDNVEQADEMVKLATAVAHLIGRSNYDAMSGQYYARFVVKNVDNSDSYLRQPHRVMELHNDGTYVEEVTDYVLMMKIDEQNMAGGNSLLLHLDDWEHLERFFSHPLARRSMRFAAPPSKNVSHDVYHPVFDVDQQGRPVMRYIDQFVQPKDFEEGVWLSDLSDALETSKNILSVPVPVGKFLLINNLFWLHGRDRFTPHPDLRRELMRQRGYFAYSTRCYQTHQ</sequence>
<gene>
    <name evidence="1" type="primary">glaH</name>
    <name type="ordered locus">CKO_04006</name>
</gene>